<reference key="1">
    <citation type="submission" date="2008-06" db="EMBL/GenBank/DDBJ databases">
        <title>Complete sequence of Chloroherpeton thalassium ATCC 35110.</title>
        <authorList>
            <consortium name="US DOE Joint Genome Institute"/>
            <person name="Lucas S."/>
            <person name="Copeland A."/>
            <person name="Lapidus A."/>
            <person name="Glavina del Rio T."/>
            <person name="Dalin E."/>
            <person name="Tice H."/>
            <person name="Bruce D."/>
            <person name="Goodwin L."/>
            <person name="Pitluck S."/>
            <person name="Schmutz J."/>
            <person name="Larimer F."/>
            <person name="Land M."/>
            <person name="Hauser L."/>
            <person name="Kyrpides N."/>
            <person name="Mikhailova N."/>
            <person name="Liu Z."/>
            <person name="Li T."/>
            <person name="Zhao F."/>
            <person name="Overmann J."/>
            <person name="Bryant D.A."/>
            <person name="Richardson P."/>
        </authorList>
    </citation>
    <scope>NUCLEOTIDE SEQUENCE [LARGE SCALE GENOMIC DNA]</scope>
    <source>
        <strain>ATCC 35110 / GB-78</strain>
    </source>
</reference>
<comment type="function">
    <text evidence="1">Functions in the biosynthesis of branched-chain amino acids. Catalyzes the dehydration of (2R,3R)-2,3-dihydroxy-3-methylpentanoate (2,3-dihydroxy-3-methylvalerate) into 2-oxo-3-methylpentanoate (2-oxo-3-methylvalerate) and of (2R)-2,3-dihydroxy-3-methylbutanoate (2,3-dihydroxyisovalerate) into 2-oxo-3-methylbutanoate (2-oxoisovalerate), the penultimate precursor to L-isoleucine and L-valine, respectively.</text>
</comment>
<comment type="catalytic activity">
    <reaction evidence="1">
        <text>(2R)-2,3-dihydroxy-3-methylbutanoate = 3-methyl-2-oxobutanoate + H2O</text>
        <dbReference type="Rhea" id="RHEA:24809"/>
        <dbReference type="ChEBI" id="CHEBI:11851"/>
        <dbReference type="ChEBI" id="CHEBI:15377"/>
        <dbReference type="ChEBI" id="CHEBI:49072"/>
        <dbReference type="EC" id="4.2.1.9"/>
    </reaction>
    <physiologicalReaction direction="left-to-right" evidence="1">
        <dbReference type="Rhea" id="RHEA:24810"/>
    </physiologicalReaction>
</comment>
<comment type="catalytic activity">
    <reaction evidence="1">
        <text>(2R,3R)-2,3-dihydroxy-3-methylpentanoate = (S)-3-methyl-2-oxopentanoate + H2O</text>
        <dbReference type="Rhea" id="RHEA:27694"/>
        <dbReference type="ChEBI" id="CHEBI:15377"/>
        <dbReference type="ChEBI" id="CHEBI:35146"/>
        <dbReference type="ChEBI" id="CHEBI:49258"/>
        <dbReference type="EC" id="4.2.1.9"/>
    </reaction>
    <physiologicalReaction direction="left-to-right" evidence="1">
        <dbReference type="Rhea" id="RHEA:27695"/>
    </physiologicalReaction>
</comment>
<comment type="cofactor">
    <cofactor evidence="1">
        <name>[2Fe-2S] cluster</name>
        <dbReference type="ChEBI" id="CHEBI:190135"/>
    </cofactor>
    <text evidence="1">Binds 1 [2Fe-2S] cluster per subunit. This cluster acts as a Lewis acid cofactor.</text>
</comment>
<comment type="cofactor">
    <cofactor evidence="1">
        <name>Mg(2+)</name>
        <dbReference type="ChEBI" id="CHEBI:18420"/>
    </cofactor>
</comment>
<comment type="pathway">
    <text evidence="1">Amino-acid biosynthesis; L-isoleucine biosynthesis; L-isoleucine from 2-oxobutanoate: step 3/4.</text>
</comment>
<comment type="pathway">
    <text evidence="1">Amino-acid biosynthesis; L-valine biosynthesis; L-valine from pyruvate: step 3/4.</text>
</comment>
<comment type="subunit">
    <text evidence="1">Homodimer.</text>
</comment>
<comment type="similarity">
    <text evidence="1">Belongs to the IlvD/Edd family.</text>
</comment>
<keyword id="KW-0001">2Fe-2S</keyword>
<keyword id="KW-0028">Amino-acid biosynthesis</keyword>
<keyword id="KW-0100">Branched-chain amino acid biosynthesis</keyword>
<keyword id="KW-0408">Iron</keyword>
<keyword id="KW-0411">Iron-sulfur</keyword>
<keyword id="KW-0456">Lyase</keyword>
<keyword id="KW-0460">Magnesium</keyword>
<keyword id="KW-0479">Metal-binding</keyword>
<keyword id="KW-1185">Reference proteome</keyword>
<evidence type="ECO:0000255" key="1">
    <source>
        <dbReference type="HAMAP-Rule" id="MF_00012"/>
    </source>
</evidence>
<organism>
    <name type="scientific">Chloroherpeton thalassium (strain ATCC 35110 / GB-78)</name>
    <dbReference type="NCBI Taxonomy" id="517418"/>
    <lineage>
        <taxon>Bacteria</taxon>
        <taxon>Pseudomonadati</taxon>
        <taxon>Chlorobiota</taxon>
        <taxon>Chlorobiia</taxon>
        <taxon>Chlorobiales</taxon>
        <taxon>Chloroherpetonaceae</taxon>
        <taxon>Chloroherpeton</taxon>
    </lineage>
</organism>
<accession>B3QSP3</accession>
<proteinExistence type="inferred from homology"/>
<dbReference type="EC" id="4.2.1.9" evidence="1"/>
<dbReference type="EMBL" id="CP001100">
    <property type="protein sequence ID" value="ACF14090.1"/>
    <property type="molecule type" value="Genomic_DNA"/>
</dbReference>
<dbReference type="RefSeq" id="WP_012500174.1">
    <property type="nucleotide sequence ID" value="NC_011026.1"/>
</dbReference>
<dbReference type="SMR" id="B3QSP3"/>
<dbReference type="STRING" id="517418.Ctha_1632"/>
<dbReference type="KEGG" id="cts:Ctha_1632"/>
<dbReference type="eggNOG" id="COG0129">
    <property type="taxonomic scope" value="Bacteria"/>
</dbReference>
<dbReference type="HOGENOM" id="CLU_014271_4_2_10"/>
<dbReference type="OrthoDB" id="9807077at2"/>
<dbReference type="UniPathway" id="UPA00047">
    <property type="reaction ID" value="UER00057"/>
</dbReference>
<dbReference type="UniPathway" id="UPA00049">
    <property type="reaction ID" value="UER00061"/>
</dbReference>
<dbReference type="Proteomes" id="UP000001208">
    <property type="component" value="Chromosome"/>
</dbReference>
<dbReference type="GO" id="GO:0005829">
    <property type="term" value="C:cytosol"/>
    <property type="evidence" value="ECO:0007669"/>
    <property type="project" value="TreeGrafter"/>
</dbReference>
<dbReference type="GO" id="GO:0051537">
    <property type="term" value="F:2 iron, 2 sulfur cluster binding"/>
    <property type="evidence" value="ECO:0007669"/>
    <property type="project" value="UniProtKB-UniRule"/>
</dbReference>
<dbReference type="GO" id="GO:0004160">
    <property type="term" value="F:dihydroxy-acid dehydratase activity"/>
    <property type="evidence" value="ECO:0007669"/>
    <property type="project" value="UniProtKB-UniRule"/>
</dbReference>
<dbReference type="GO" id="GO:0000287">
    <property type="term" value="F:magnesium ion binding"/>
    <property type="evidence" value="ECO:0007669"/>
    <property type="project" value="UniProtKB-UniRule"/>
</dbReference>
<dbReference type="GO" id="GO:0009097">
    <property type="term" value="P:isoleucine biosynthetic process"/>
    <property type="evidence" value="ECO:0007669"/>
    <property type="project" value="UniProtKB-UniRule"/>
</dbReference>
<dbReference type="GO" id="GO:0009099">
    <property type="term" value="P:L-valine biosynthetic process"/>
    <property type="evidence" value="ECO:0007669"/>
    <property type="project" value="UniProtKB-UniRule"/>
</dbReference>
<dbReference type="FunFam" id="3.50.30.80:FF:000001">
    <property type="entry name" value="Dihydroxy-acid dehydratase"/>
    <property type="match status" value="1"/>
</dbReference>
<dbReference type="Gene3D" id="3.50.30.80">
    <property type="entry name" value="IlvD/EDD C-terminal domain-like"/>
    <property type="match status" value="1"/>
</dbReference>
<dbReference type="HAMAP" id="MF_00012">
    <property type="entry name" value="IlvD"/>
    <property type="match status" value="1"/>
</dbReference>
<dbReference type="InterPro" id="IPR042096">
    <property type="entry name" value="Dihydro-acid_dehy_C"/>
</dbReference>
<dbReference type="InterPro" id="IPR004404">
    <property type="entry name" value="DihydroxyA_deHydtase"/>
</dbReference>
<dbReference type="InterPro" id="IPR020558">
    <property type="entry name" value="DiOHA_6PGluconate_deHydtase_CS"/>
</dbReference>
<dbReference type="InterPro" id="IPR056740">
    <property type="entry name" value="ILV_EDD_C"/>
</dbReference>
<dbReference type="InterPro" id="IPR000581">
    <property type="entry name" value="ILV_EDD_N"/>
</dbReference>
<dbReference type="InterPro" id="IPR037237">
    <property type="entry name" value="IlvD/EDD_N"/>
</dbReference>
<dbReference type="NCBIfam" id="TIGR00110">
    <property type="entry name" value="ilvD"/>
    <property type="match status" value="1"/>
</dbReference>
<dbReference type="NCBIfam" id="NF002068">
    <property type="entry name" value="PRK00911.1"/>
    <property type="match status" value="1"/>
</dbReference>
<dbReference type="PANTHER" id="PTHR43661">
    <property type="entry name" value="D-XYLONATE DEHYDRATASE"/>
    <property type="match status" value="1"/>
</dbReference>
<dbReference type="PANTHER" id="PTHR43661:SF3">
    <property type="entry name" value="D-XYLONATE DEHYDRATASE YAGF-RELATED"/>
    <property type="match status" value="1"/>
</dbReference>
<dbReference type="Pfam" id="PF24877">
    <property type="entry name" value="ILV_EDD_C"/>
    <property type="match status" value="1"/>
</dbReference>
<dbReference type="Pfam" id="PF00920">
    <property type="entry name" value="ILVD_EDD_N"/>
    <property type="match status" value="1"/>
</dbReference>
<dbReference type="SUPFAM" id="SSF143975">
    <property type="entry name" value="IlvD/EDD N-terminal domain-like"/>
    <property type="match status" value="1"/>
</dbReference>
<dbReference type="SUPFAM" id="SSF52016">
    <property type="entry name" value="LeuD/IlvD-like"/>
    <property type="match status" value="1"/>
</dbReference>
<dbReference type="PROSITE" id="PS00886">
    <property type="entry name" value="ILVD_EDD_1"/>
    <property type="match status" value="1"/>
</dbReference>
<dbReference type="PROSITE" id="PS00887">
    <property type="entry name" value="ILVD_EDD_2"/>
    <property type="match status" value="1"/>
</dbReference>
<name>ILVD_CHLT3</name>
<protein>
    <recommendedName>
        <fullName evidence="1">Dihydroxy-acid dehydratase</fullName>
        <shortName evidence="1">DAD</shortName>
        <ecNumber evidence="1">4.2.1.9</ecNumber>
    </recommendedName>
</protein>
<feature type="chain" id="PRO_1000089375" description="Dihydroxy-acid dehydratase">
    <location>
        <begin position="1"/>
        <end position="560"/>
    </location>
</feature>
<feature type="active site" description="Proton acceptor" evidence="1">
    <location>
        <position position="473"/>
    </location>
</feature>
<feature type="binding site" evidence="1">
    <location>
        <position position="80"/>
    </location>
    <ligand>
        <name>Mg(2+)</name>
        <dbReference type="ChEBI" id="CHEBI:18420"/>
    </ligand>
</feature>
<feature type="binding site" evidence="1">
    <location>
        <position position="121"/>
    </location>
    <ligand>
        <name>[2Fe-2S] cluster</name>
        <dbReference type="ChEBI" id="CHEBI:190135"/>
    </ligand>
</feature>
<feature type="binding site" evidence="1">
    <location>
        <position position="122"/>
    </location>
    <ligand>
        <name>Mg(2+)</name>
        <dbReference type="ChEBI" id="CHEBI:18420"/>
    </ligand>
</feature>
<feature type="binding site" description="via carbamate group" evidence="1">
    <location>
        <position position="123"/>
    </location>
    <ligand>
        <name>Mg(2+)</name>
        <dbReference type="ChEBI" id="CHEBI:18420"/>
    </ligand>
</feature>
<feature type="binding site" evidence="1">
    <location>
        <position position="194"/>
    </location>
    <ligand>
        <name>[2Fe-2S] cluster</name>
        <dbReference type="ChEBI" id="CHEBI:190135"/>
    </ligand>
</feature>
<feature type="binding site" evidence="1">
    <location>
        <position position="447"/>
    </location>
    <ligand>
        <name>Mg(2+)</name>
        <dbReference type="ChEBI" id="CHEBI:18420"/>
    </ligand>
</feature>
<feature type="modified residue" description="N6-carboxylysine" evidence="1">
    <location>
        <position position="123"/>
    </location>
</feature>
<sequence>MRSDKIKLGFDKAPHRSLLKATGAIQSDEDFQKPFIGIANSYIDIIPGHVHLHDFAKRIKEAVRKAGGIPFEFNTIGVDDGIAMGHIGMRYSLASRELIADAVETVVGAHWLDAMICIPNCDKIVPGMMMAAVRLDIPTIFISGGPMKVGVMADGEKVDLISVFEGVGEYSSGKIDDARLKELENNGCPTCGSCSGMFTANSMNCLAEALGLALPGNGTILAVDPKREALAEAAAKQIMTLVEKDIKPSDLLSRESFLNAFALDLAMGGSTNTILHTLAIANEAGINFDLAELNTLAAKTPYICKVSPATKNVHIEDVDRAGGISAILKELSKLDGVLDLSRPTVTGKTLGENIADAEVKDKAVIHSVEDPYSATGGLAVLFGNLAPQGCVVKTGAVDPKMMQHTGPARIYESQDEAISGILKGDVQAGEVVVIRYEGPKGGPGMPEMLAPTSTIMGQGLGDKVALITDGRFSGGTRGACIGHVSPEAAERGPIAALQNGDKITIDIPNKRIAVDLSDEEIEARLKALPPFEPKIKRGYLARYSQMVTSAGSGAVLKSFD</sequence>
<gene>
    <name evidence="1" type="primary">ilvD</name>
    <name type="ordered locus">Ctha_1632</name>
</gene>